<sequence length="351" mass="40103">MSGLIAYCRQGFEPELAAELRDRAVLLGIAGDIYAQRNHGFVLLRCDPLHVDTLLQQLHWRRLIFARQTLRLHAELKTLNSRDRIAPILAALPKTPCFGDLWIEYPDSDMGKPLAGLARSFGNALRPVLRSAGRLSAQLHPQWPRLHVCFLSGDHVLLGSTRSVDSAPWQLGIPRLKLLPEAPSRSALKLEEALITLLTPNEREAKLRPGMQATDLGAAPGGWTWVLIRQHLRVTSIDNAALRPPLLNHPLVQHVRADGFRWTPPRPMDWMVCDMVEQPRRVAERMAVWLREGWCRHMIFNLKLPMKKRWDETRLCLERFETQAAVPLTLRAKQLYHDREEITVYASNDAR</sequence>
<gene>
    <name evidence="1" type="primary">rlmM</name>
    <name type="ordered locus">Xfasm12_2090</name>
</gene>
<feature type="chain" id="PRO_1000201538" description="Ribosomal RNA large subunit methyltransferase M">
    <location>
        <begin position="1"/>
        <end position="351"/>
    </location>
</feature>
<feature type="active site" description="Proton acceptor" evidence="1">
    <location>
        <position position="303"/>
    </location>
</feature>
<feature type="binding site" evidence="1">
    <location>
        <position position="186"/>
    </location>
    <ligand>
        <name>S-adenosyl-L-methionine</name>
        <dbReference type="ChEBI" id="CHEBI:59789"/>
    </ligand>
</feature>
<feature type="binding site" evidence="1">
    <location>
        <begin position="219"/>
        <end position="222"/>
    </location>
    <ligand>
        <name>S-adenosyl-L-methionine</name>
        <dbReference type="ChEBI" id="CHEBI:59789"/>
    </ligand>
</feature>
<feature type="binding site" evidence="1">
    <location>
        <position position="238"/>
    </location>
    <ligand>
        <name>S-adenosyl-L-methionine</name>
        <dbReference type="ChEBI" id="CHEBI:59789"/>
    </ligand>
</feature>
<feature type="binding site" evidence="1">
    <location>
        <position position="258"/>
    </location>
    <ligand>
        <name>S-adenosyl-L-methionine</name>
        <dbReference type="ChEBI" id="CHEBI:59789"/>
    </ligand>
</feature>
<feature type="binding site" evidence="1">
    <location>
        <position position="274"/>
    </location>
    <ligand>
        <name>S-adenosyl-L-methionine</name>
        <dbReference type="ChEBI" id="CHEBI:59789"/>
    </ligand>
</feature>
<keyword id="KW-0963">Cytoplasm</keyword>
<keyword id="KW-0489">Methyltransferase</keyword>
<keyword id="KW-0698">rRNA processing</keyword>
<keyword id="KW-0949">S-adenosyl-L-methionine</keyword>
<keyword id="KW-0808">Transferase</keyword>
<comment type="function">
    <text evidence="1">Catalyzes the 2'-O-methylation at nucleotide C2498 in 23S rRNA.</text>
</comment>
<comment type="catalytic activity">
    <reaction evidence="1">
        <text>cytidine(2498) in 23S rRNA + S-adenosyl-L-methionine = 2'-O-methylcytidine(2498) in 23S rRNA + S-adenosyl-L-homocysteine + H(+)</text>
        <dbReference type="Rhea" id="RHEA:42788"/>
        <dbReference type="Rhea" id="RHEA-COMP:10244"/>
        <dbReference type="Rhea" id="RHEA-COMP:10245"/>
        <dbReference type="ChEBI" id="CHEBI:15378"/>
        <dbReference type="ChEBI" id="CHEBI:57856"/>
        <dbReference type="ChEBI" id="CHEBI:59789"/>
        <dbReference type="ChEBI" id="CHEBI:74495"/>
        <dbReference type="ChEBI" id="CHEBI:82748"/>
        <dbReference type="EC" id="2.1.1.186"/>
    </reaction>
</comment>
<comment type="subunit">
    <text evidence="1">Monomer.</text>
</comment>
<comment type="subcellular location">
    <subcellularLocation>
        <location evidence="1">Cytoplasm</location>
    </subcellularLocation>
</comment>
<comment type="similarity">
    <text evidence="1">Belongs to the class I-like SAM-binding methyltransferase superfamily. RNA methyltransferase RlmE family. RlmM subfamily.</text>
</comment>
<protein>
    <recommendedName>
        <fullName evidence="1">Ribosomal RNA large subunit methyltransferase M</fullName>
        <ecNumber evidence="1">2.1.1.186</ecNumber>
    </recommendedName>
    <alternativeName>
        <fullName evidence="1">23S rRNA (cytidine2498-2'-O)-methyltransferase</fullName>
    </alternativeName>
    <alternativeName>
        <fullName evidence="1">23S rRNA 2'-O-ribose methyltransferase RlmM</fullName>
    </alternativeName>
</protein>
<evidence type="ECO:0000255" key="1">
    <source>
        <dbReference type="HAMAP-Rule" id="MF_01551"/>
    </source>
</evidence>
<organism>
    <name type="scientific">Xylella fastidiosa (strain M12)</name>
    <dbReference type="NCBI Taxonomy" id="405440"/>
    <lineage>
        <taxon>Bacteria</taxon>
        <taxon>Pseudomonadati</taxon>
        <taxon>Pseudomonadota</taxon>
        <taxon>Gammaproteobacteria</taxon>
        <taxon>Lysobacterales</taxon>
        <taxon>Lysobacteraceae</taxon>
        <taxon>Xylella</taxon>
    </lineage>
</organism>
<name>RLMM_XYLFM</name>
<reference key="1">
    <citation type="journal article" date="2010" name="J. Bacteriol.">
        <title>Whole genome sequences of two Xylella fastidiosa strains (M12 and M23) causing almond leaf scorch disease in California.</title>
        <authorList>
            <person name="Chen J."/>
            <person name="Xie G."/>
            <person name="Han S."/>
            <person name="Chertkov O."/>
            <person name="Sims D."/>
            <person name="Civerolo E.L."/>
        </authorList>
    </citation>
    <scope>NUCLEOTIDE SEQUENCE [LARGE SCALE GENOMIC DNA]</scope>
    <source>
        <strain>M12</strain>
    </source>
</reference>
<proteinExistence type="inferred from homology"/>
<accession>B0U5D5</accession>
<dbReference type="EC" id="2.1.1.186" evidence="1"/>
<dbReference type="EMBL" id="CP000941">
    <property type="protein sequence ID" value="ACA12953.1"/>
    <property type="molecule type" value="Genomic_DNA"/>
</dbReference>
<dbReference type="RefSeq" id="WP_004084564.1">
    <property type="nucleotide sequence ID" value="NC_010513.1"/>
</dbReference>
<dbReference type="SMR" id="B0U5D5"/>
<dbReference type="KEGG" id="xfm:Xfasm12_2090"/>
<dbReference type="HOGENOM" id="CLU_043780_0_0_6"/>
<dbReference type="GO" id="GO:0005737">
    <property type="term" value="C:cytoplasm"/>
    <property type="evidence" value="ECO:0007669"/>
    <property type="project" value="UniProtKB-SubCell"/>
</dbReference>
<dbReference type="GO" id="GO:0008757">
    <property type="term" value="F:S-adenosylmethionine-dependent methyltransferase activity"/>
    <property type="evidence" value="ECO:0007669"/>
    <property type="project" value="UniProtKB-UniRule"/>
</dbReference>
<dbReference type="GO" id="GO:0032259">
    <property type="term" value="P:methylation"/>
    <property type="evidence" value="ECO:0007669"/>
    <property type="project" value="UniProtKB-KW"/>
</dbReference>
<dbReference type="GO" id="GO:0006364">
    <property type="term" value="P:rRNA processing"/>
    <property type="evidence" value="ECO:0007669"/>
    <property type="project" value="UniProtKB-UniRule"/>
</dbReference>
<dbReference type="Gene3D" id="3.30.2300.20">
    <property type="match status" value="1"/>
</dbReference>
<dbReference type="Gene3D" id="3.30.70.2810">
    <property type="match status" value="1"/>
</dbReference>
<dbReference type="Gene3D" id="3.40.50.150">
    <property type="entry name" value="Vaccinia Virus protein VP39"/>
    <property type="match status" value="1"/>
</dbReference>
<dbReference type="HAMAP" id="MF_01551">
    <property type="entry name" value="23SrRNA_methyltr_M"/>
    <property type="match status" value="1"/>
</dbReference>
<dbReference type="InterPro" id="IPR040739">
    <property type="entry name" value="RlmM_FDX"/>
</dbReference>
<dbReference type="InterPro" id="IPR048646">
    <property type="entry name" value="RlmM_THUMP-like"/>
</dbReference>
<dbReference type="InterPro" id="IPR002877">
    <property type="entry name" value="RNA_MeTrfase_FtsJ_dom"/>
</dbReference>
<dbReference type="InterPro" id="IPR011224">
    <property type="entry name" value="rRNA_MeTrfase_M"/>
</dbReference>
<dbReference type="InterPro" id="IPR029063">
    <property type="entry name" value="SAM-dependent_MTases_sf"/>
</dbReference>
<dbReference type="NCBIfam" id="NF008734">
    <property type="entry name" value="PRK11760.1"/>
    <property type="match status" value="1"/>
</dbReference>
<dbReference type="PANTHER" id="PTHR37524">
    <property type="entry name" value="RIBOSOMAL RNA LARGE SUBUNIT METHYLTRANSFERASE M"/>
    <property type="match status" value="1"/>
</dbReference>
<dbReference type="PANTHER" id="PTHR37524:SF2">
    <property type="entry name" value="RIBOSOMAL RNA METHYLTRANSFERASE FTSJ DOMAIN-CONTAINING PROTEIN"/>
    <property type="match status" value="1"/>
</dbReference>
<dbReference type="Pfam" id="PF01728">
    <property type="entry name" value="FtsJ"/>
    <property type="match status" value="1"/>
</dbReference>
<dbReference type="Pfam" id="PF18125">
    <property type="entry name" value="RlmM_FDX"/>
    <property type="match status" value="1"/>
</dbReference>
<dbReference type="Pfam" id="PF21239">
    <property type="entry name" value="RLMM_N"/>
    <property type="match status" value="1"/>
</dbReference>
<dbReference type="PIRSF" id="PIRSF028774">
    <property type="entry name" value="UCP028774"/>
    <property type="match status" value="1"/>
</dbReference>
<dbReference type="SUPFAM" id="SSF53335">
    <property type="entry name" value="S-adenosyl-L-methionine-dependent methyltransferases"/>
    <property type="match status" value="1"/>
</dbReference>